<reference key="1">
    <citation type="journal article" date="2008" name="Proc. Natl. Acad. Sci. U.S.A.">
        <title>Nitrogen fixation island and rhizosphere competence traits in the genome of root-associated Pseudomonas stutzeri A1501.</title>
        <authorList>
            <person name="Yan Y."/>
            <person name="Yang J."/>
            <person name="Dou Y."/>
            <person name="Chen M."/>
            <person name="Ping S."/>
            <person name="Peng J."/>
            <person name="Lu W."/>
            <person name="Zhang W."/>
            <person name="Yao Z."/>
            <person name="Li H."/>
            <person name="Liu W."/>
            <person name="He S."/>
            <person name="Geng L."/>
            <person name="Zhang X."/>
            <person name="Yang F."/>
            <person name="Yu H."/>
            <person name="Zhan Y."/>
            <person name="Li D."/>
            <person name="Lin Z."/>
            <person name="Wang Y."/>
            <person name="Elmerich C."/>
            <person name="Lin M."/>
            <person name="Jin Q."/>
        </authorList>
    </citation>
    <scope>NUCLEOTIDE SEQUENCE [LARGE SCALE GENOMIC DNA]</scope>
    <source>
        <strain>A1501</strain>
    </source>
</reference>
<feature type="chain" id="PRO_1000070566" description="Agmatine deiminase">
    <location>
        <begin position="1"/>
        <end position="368"/>
    </location>
</feature>
<feature type="active site" description="Amidino-cysteine intermediate" evidence="1">
    <location>
        <position position="357"/>
    </location>
</feature>
<keyword id="KW-0378">Hydrolase</keyword>
<keyword id="KW-0620">Polyamine biosynthesis</keyword>
<keyword id="KW-1185">Reference proteome</keyword>
<protein>
    <recommendedName>
        <fullName evidence="1">Agmatine deiminase</fullName>
        <ecNumber evidence="1">3.5.3.12</ecNumber>
    </recommendedName>
    <alternativeName>
        <fullName evidence="1">Agmatine iminohydrolase</fullName>
    </alternativeName>
</protein>
<name>AGUA_STUS1</name>
<sequence length="368" mass="40655">MTTLTSTPRQDGYYMPAEWAPHSQTWMVWPQRPDNWRDNAAPAQAAFAAVAKAIARFEPVTVCASAEQYLAARAALDDPRIRVVEMSSDDAWVRDTGPTFVIDDNGGLRGVDWTFNAWGGKDGGLYADWQRDDEVARKILEIEYCDRYRTEGFVLEGGSIHVDGEGTLITTEECLLNRNRNPQLSREQIEAVLREHLAVDSIIWLPHGLFNDETDGHVDNFCCFVRPGEVLLAWTDDANDPNYARCQAAMAVLQRARDAKGRALIVHKIPIPGPLHASDAECAGVVALDGSQLRDPSIRLAGSYVNFLIVNGGIIAPAFGDPLDGEAERILREVFPEHDVVMVPGREILLGGGNIHCITQQQPAPFVR</sequence>
<comment type="function">
    <text evidence="1">Mediates the hydrolysis of agmatine into N-carbamoylputrescine in the arginine decarboxylase (ADC) pathway of putrescine biosynthesis, a basic polyamine.</text>
</comment>
<comment type="catalytic activity">
    <reaction evidence="1">
        <text>agmatine + H2O = N-carbamoylputrescine + NH4(+)</text>
        <dbReference type="Rhea" id="RHEA:18037"/>
        <dbReference type="ChEBI" id="CHEBI:15377"/>
        <dbReference type="ChEBI" id="CHEBI:28938"/>
        <dbReference type="ChEBI" id="CHEBI:58145"/>
        <dbReference type="ChEBI" id="CHEBI:58318"/>
        <dbReference type="EC" id="3.5.3.12"/>
    </reaction>
</comment>
<comment type="pathway">
    <text evidence="1">Amine and polyamine biosynthesis; putrescine biosynthesis via agmatine pathway; N-carbamoylputrescine from agmatine: step 1/1.</text>
</comment>
<comment type="subunit">
    <text evidence="1">Homodimer.</text>
</comment>
<comment type="similarity">
    <text evidence="1">Belongs to the agmatine deiminase family.</text>
</comment>
<gene>
    <name evidence="1" type="primary">aguA</name>
    <name type="ordered locus">PST_0060</name>
</gene>
<dbReference type="EC" id="3.5.3.12" evidence="1"/>
<dbReference type="EMBL" id="CP000304">
    <property type="protein sequence ID" value="ABP77768.1"/>
    <property type="molecule type" value="Genomic_DNA"/>
</dbReference>
<dbReference type="RefSeq" id="WP_011911310.1">
    <property type="nucleotide sequence ID" value="NC_009434.1"/>
</dbReference>
<dbReference type="SMR" id="A4VFL7"/>
<dbReference type="KEGG" id="psa:PST_0060"/>
<dbReference type="eggNOG" id="COG2957">
    <property type="taxonomic scope" value="Bacteria"/>
</dbReference>
<dbReference type="HOGENOM" id="CLU_037682_1_0_6"/>
<dbReference type="UniPathway" id="UPA00534">
    <property type="reaction ID" value="UER00285"/>
</dbReference>
<dbReference type="Proteomes" id="UP000000233">
    <property type="component" value="Chromosome"/>
</dbReference>
<dbReference type="GO" id="GO:0047632">
    <property type="term" value="F:agmatine deiminase activity"/>
    <property type="evidence" value="ECO:0007669"/>
    <property type="project" value="UniProtKB-UniRule"/>
</dbReference>
<dbReference type="GO" id="GO:0004668">
    <property type="term" value="F:protein-arginine deiminase activity"/>
    <property type="evidence" value="ECO:0007669"/>
    <property type="project" value="InterPro"/>
</dbReference>
<dbReference type="GO" id="GO:0033388">
    <property type="term" value="P:putrescine biosynthetic process from arginine"/>
    <property type="evidence" value="ECO:0007669"/>
    <property type="project" value="UniProtKB-UniRule"/>
</dbReference>
<dbReference type="Gene3D" id="3.75.10.10">
    <property type="entry name" value="L-arginine/glycine Amidinotransferase, Chain A"/>
    <property type="match status" value="1"/>
</dbReference>
<dbReference type="HAMAP" id="MF_01841">
    <property type="entry name" value="Agmatine_deimin"/>
    <property type="match status" value="1"/>
</dbReference>
<dbReference type="InterPro" id="IPR017754">
    <property type="entry name" value="Agmatine_deiminase"/>
</dbReference>
<dbReference type="InterPro" id="IPR007466">
    <property type="entry name" value="Peptidyl-Arg-deiminase_porph"/>
</dbReference>
<dbReference type="NCBIfam" id="TIGR03380">
    <property type="entry name" value="agmatine_aguA"/>
    <property type="match status" value="1"/>
</dbReference>
<dbReference type="NCBIfam" id="NF010070">
    <property type="entry name" value="PRK13551.1"/>
    <property type="match status" value="1"/>
</dbReference>
<dbReference type="PANTHER" id="PTHR31377">
    <property type="entry name" value="AGMATINE DEIMINASE-RELATED"/>
    <property type="match status" value="1"/>
</dbReference>
<dbReference type="PANTHER" id="PTHR31377:SF0">
    <property type="entry name" value="AGMATINE DEIMINASE-RELATED"/>
    <property type="match status" value="1"/>
</dbReference>
<dbReference type="Pfam" id="PF04371">
    <property type="entry name" value="PAD_porph"/>
    <property type="match status" value="1"/>
</dbReference>
<dbReference type="SUPFAM" id="SSF55909">
    <property type="entry name" value="Pentein"/>
    <property type="match status" value="1"/>
</dbReference>
<accession>A4VFL7</accession>
<organism>
    <name type="scientific">Stutzerimonas stutzeri (strain A1501)</name>
    <name type="common">Pseudomonas stutzeri</name>
    <dbReference type="NCBI Taxonomy" id="379731"/>
    <lineage>
        <taxon>Bacteria</taxon>
        <taxon>Pseudomonadati</taxon>
        <taxon>Pseudomonadota</taxon>
        <taxon>Gammaproteobacteria</taxon>
        <taxon>Pseudomonadales</taxon>
        <taxon>Pseudomonadaceae</taxon>
        <taxon>Stutzerimonas</taxon>
    </lineage>
</organism>
<evidence type="ECO:0000255" key="1">
    <source>
        <dbReference type="HAMAP-Rule" id="MF_01841"/>
    </source>
</evidence>
<proteinExistence type="inferred from homology"/>